<keyword id="KW-0067">ATP-binding</keyword>
<keyword id="KW-0963">Cytoplasm</keyword>
<keyword id="KW-0227">DNA damage</keyword>
<keyword id="KW-0234">DNA repair</keyword>
<keyword id="KW-0235">DNA replication</keyword>
<keyword id="KW-0238">DNA-binding</keyword>
<keyword id="KW-0547">Nucleotide-binding</keyword>
<keyword id="KW-0742">SOS response</keyword>
<organism>
    <name type="scientific">Pseudomonas putida</name>
    <name type="common">Arthrobacter siderocapsulatus</name>
    <dbReference type="NCBI Taxonomy" id="303"/>
    <lineage>
        <taxon>Bacteria</taxon>
        <taxon>Pseudomonadati</taxon>
        <taxon>Pseudomonadota</taxon>
        <taxon>Gammaproteobacteria</taxon>
        <taxon>Pseudomonadales</taxon>
        <taxon>Pseudomonadaceae</taxon>
        <taxon>Pseudomonas</taxon>
    </lineage>
</organism>
<reference key="1">
    <citation type="journal article" date="1992" name="Nucleic Acids Res.">
        <title>Sequence and complementation analysis of recF genes from Escherichia coli, Salmonella typhimurium, Pseudomonas putida and Bacillus subtilis: evidence for an essential phosphate binding loop.</title>
        <authorList>
            <person name="Sandler S.J."/>
            <person name="Chackerian B."/>
            <person name="Li J.T."/>
            <person name="Clark A.J."/>
        </authorList>
    </citation>
    <scope>NUCLEOTIDE SEQUENCE [GENOMIC DNA]</scope>
    <source>
        <strain>TN2100</strain>
    </source>
</reference>
<reference key="2">
    <citation type="journal article" date="1989" name="Mol. Gen. Genet.">
        <title>Structure of the dnaA region of Pseudomonas putida: conservation among three bacteria, Bacillus subtilis, Escherichia coli and P. putida.</title>
        <authorList>
            <person name="Fujita M.Q."/>
            <person name="Yoshikawa H."/>
            <person name="Ogasawara N."/>
        </authorList>
    </citation>
    <scope>PRELIMINARY NUCLEOTIDE SEQUENCE [GENOMIC DNA] OF 1-99 AND 199-365</scope>
    <source>
        <strain>TN2100</strain>
    </source>
</reference>
<proteinExistence type="inferred from homology"/>
<name>RECF_PSEPU</name>
<sequence length="365" mass="41765">MSLRRIMVTAVRNLHPVTLLPSPRINILYGANGSGKTSVLEAVHLLGLARSFRSTRLNPVIQYEQAACTVFGEVQLTEGGTSNLGVSRERQGEFTIRIDGQNARQAQLAELLPLQLINPDSFRLLEGAPKIRRQFLDWGVFHVEPRFLPAWQRLQKALRQRNSWLRHGTLDPASQAAWDRELCLRSAEIDEYRRNYIKALKPVFERTLSELVELDGLTLSYYRGWDKDRELQEVLASSLLRDQQMGHTQAGPQRADLRLRLAGNNAADILSRGQQKLVGMRIIAQGHLVSQARRGHCIYLVDDLPSELDDQHRRALCRLLEELRCQVFITCVDHELLREGWQTETPVALFHVEQGRITQTHDHRE</sequence>
<protein>
    <recommendedName>
        <fullName>DNA replication and repair protein RecF</fullName>
    </recommendedName>
</protein>
<feature type="chain" id="PRO_0000196444" description="DNA replication and repair protein RecF">
    <location>
        <begin position="1"/>
        <end position="365"/>
    </location>
</feature>
<feature type="binding site" evidence="2">
    <location>
        <begin position="30"/>
        <end position="37"/>
    </location>
    <ligand>
        <name>ATP</name>
        <dbReference type="ChEBI" id="CHEBI:30616"/>
    </ligand>
</feature>
<accession>P13456</accession>
<gene>
    <name type="primary">recF</name>
</gene>
<evidence type="ECO:0000250" key="1"/>
<evidence type="ECO:0000255" key="2"/>
<evidence type="ECO:0000305" key="3"/>
<dbReference type="EMBL" id="X62504">
    <property type="protein sequence ID" value="CAA44365.1"/>
    <property type="molecule type" value="Genomic_DNA"/>
</dbReference>
<dbReference type="EMBL" id="X14791">
    <property type="protein sequence ID" value="CAA32895.1"/>
    <property type="molecule type" value="Genomic_DNA"/>
</dbReference>
<dbReference type="EMBL" id="X14792">
    <property type="protein sequence ID" value="CAA32896.1"/>
    <property type="status" value="ALT_SEQ"/>
    <property type="molecule type" value="Genomic_DNA"/>
</dbReference>
<dbReference type="PIR" id="PV0001">
    <property type="entry name" value="PV0001"/>
</dbReference>
<dbReference type="PIR" id="S21056">
    <property type="entry name" value="S21056"/>
</dbReference>
<dbReference type="SMR" id="P13456"/>
<dbReference type="eggNOG" id="COG1195">
    <property type="taxonomic scope" value="Bacteria"/>
</dbReference>
<dbReference type="GO" id="GO:0005737">
    <property type="term" value="C:cytoplasm"/>
    <property type="evidence" value="ECO:0007669"/>
    <property type="project" value="UniProtKB-SubCell"/>
</dbReference>
<dbReference type="GO" id="GO:0005524">
    <property type="term" value="F:ATP binding"/>
    <property type="evidence" value="ECO:0007669"/>
    <property type="project" value="UniProtKB-UniRule"/>
</dbReference>
<dbReference type="GO" id="GO:0003697">
    <property type="term" value="F:single-stranded DNA binding"/>
    <property type="evidence" value="ECO:0007669"/>
    <property type="project" value="UniProtKB-UniRule"/>
</dbReference>
<dbReference type="GO" id="GO:0006260">
    <property type="term" value="P:DNA replication"/>
    <property type="evidence" value="ECO:0007669"/>
    <property type="project" value="UniProtKB-UniRule"/>
</dbReference>
<dbReference type="GO" id="GO:0000731">
    <property type="term" value="P:DNA synthesis involved in DNA repair"/>
    <property type="evidence" value="ECO:0007669"/>
    <property type="project" value="TreeGrafter"/>
</dbReference>
<dbReference type="GO" id="GO:0006302">
    <property type="term" value="P:double-strand break repair"/>
    <property type="evidence" value="ECO:0007669"/>
    <property type="project" value="TreeGrafter"/>
</dbReference>
<dbReference type="GO" id="GO:0009432">
    <property type="term" value="P:SOS response"/>
    <property type="evidence" value="ECO:0007669"/>
    <property type="project" value="UniProtKB-UniRule"/>
</dbReference>
<dbReference type="Gene3D" id="3.40.50.300">
    <property type="entry name" value="P-loop containing nucleotide triphosphate hydrolases"/>
    <property type="match status" value="1"/>
</dbReference>
<dbReference type="Gene3D" id="1.20.1050.90">
    <property type="entry name" value="RecF/RecN/SMC, N-terminal domain"/>
    <property type="match status" value="1"/>
</dbReference>
<dbReference type="HAMAP" id="MF_00365">
    <property type="entry name" value="RecF"/>
    <property type="match status" value="1"/>
</dbReference>
<dbReference type="InterPro" id="IPR001238">
    <property type="entry name" value="DNA-binding_RecF"/>
</dbReference>
<dbReference type="InterPro" id="IPR018078">
    <property type="entry name" value="DNA-binding_RecF_CS"/>
</dbReference>
<dbReference type="InterPro" id="IPR027417">
    <property type="entry name" value="P-loop_NTPase"/>
</dbReference>
<dbReference type="InterPro" id="IPR003395">
    <property type="entry name" value="RecF/RecN/SMC_N"/>
</dbReference>
<dbReference type="InterPro" id="IPR042174">
    <property type="entry name" value="RecF_2"/>
</dbReference>
<dbReference type="NCBIfam" id="TIGR00611">
    <property type="entry name" value="recf"/>
    <property type="match status" value="1"/>
</dbReference>
<dbReference type="PANTHER" id="PTHR32182">
    <property type="entry name" value="DNA REPLICATION AND REPAIR PROTEIN RECF"/>
    <property type="match status" value="1"/>
</dbReference>
<dbReference type="PANTHER" id="PTHR32182:SF0">
    <property type="entry name" value="DNA REPLICATION AND REPAIR PROTEIN RECF"/>
    <property type="match status" value="1"/>
</dbReference>
<dbReference type="Pfam" id="PF02463">
    <property type="entry name" value="SMC_N"/>
    <property type="match status" value="1"/>
</dbReference>
<dbReference type="SUPFAM" id="SSF52540">
    <property type="entry name" value="P-loop containing nucleoside triphosphate hydrolases"/>
    <property type="match status" value="1"/>
</dbReference>
<dbReference type="PROSITE" id="PS00617">
    <property type="entry name" value="RECF_1"/>
    <property type="match status" value="1"/>
</dbReference>
<dbReference type="PROSITE" id="PS00618">
    <property type="entry name" value="RECF_2"/>
    <property type="match status" value="1"/>
</dbReference>
<comment type="function">
    <text evidence="1">The RecF protein is involved in DNA metabolism; it is required for DNA replication and normal SOS inducibility. RecF binds preferentially to single-stranded, linear DNA. It also seems to bind ATP (By similarity).</text>
</comment>
<comment type="subcellular location">
    <subcellularLocation>
        <location evidence="1">Cytoplasm</location>
    </subcellularLocation>
</comment>
<comment type="similarity">
    <text evidence="3">Belongs to the RecF family.</text>
</comment>